<protein>
    <recommendedName>
        <fullName evidence="1">Small ribosomal subunit protein bS18c</fullName>
    </recommendedName>
    <alternativeName>
        <fullName evidence="2">30S ribosomal protein S18, chloroplastic</fullName>
    </alternativeName>
</protein>
<geneLocation type="chloroplast"/>
<accession>A0ZZ57</accession>
<name>RR18_GOSBA</name>
<organism>
    <name type="scientific">Gossypium barbadense</name>
    <name type="common">Sea Island cotton</name>
    <name type="synonym">Hibiscus barbadensis</name>
    <dbReference type="NCBI Taxonomy" id="3634"/>
    <lineage>
        <taxon>Eukaryota</taxon>
        <taxon>Viridiplantae</taxon>
        <taxon>Streptophyta</taxon>
        <taxon>Embryophyta</taxon>
        <taxon>Tracheophyta</taxon>
        <taxon>Spermatophyta</taxon>
        <taxon>Magnoliopsida</taxon>
        <taxon>eudicotyledons</taxon>
        <taxon>Gunneridae</taxon>
        <taxon>Pentapetalae</taxon>
        <taxon>rosids</taxon>
        <taxon>malvids</taxon>
        <taxon>Malvales</taxon>
        <taxon>Malvaceae</taxon>
        <taxon>Malvoideae</taxon>
        <taxon>Gossypium</taxon>
    </lineage>
</organism>
<feature type="chain" id="PRO_0000276870" description="Small ribosomal subunit protein bS18c">
    <location>
        <begin position="1"/>
        <end position="101"/>
    </location>
</feature>
<comment type="subunit">
    <text>Part of the 30S ribosomal subunit.</text>
</comment>
<comment type="subcellular location">
    <subcellularLocation>
        <location>Plastid</location>
        <location>Chloroplast</location>
    </subcellularLocation>
</comment>
<comment type="similarity">
    <text evidence="1">Belongs to the bacterial ribosomal protein bS18 family.</text>
</comment>
<gene>
    <name evidence="1" type="primary">rps18</name>
</gene>
<keyword id="KW-0150">Chloroplast</keyword>
<keyword id="KW-0934">Plastid</keyword>
<keyword id="KW-0687">Ribonucleoprotein</keyword>
<keyword id="KW-0689">Ribosomal protein</keyword>
<keyword id="KW-0694">RNA-binding</keyword>
<keyword id="KW-0699">rRNA-binding</keyword>
<sequence>MDKSKRLFLKSKRSFRRRLPPIQSGDRIDYRNMSLISRFISEQGKILSRRVNRLTLKQQRLITIAIKQARILSLLPFLNNEKQFERSESTTRTTALRTRNK</sequence>
<dbReference type="EMBL" id="AP009123">
    <property type="protein sequence ID" value="BAF41269.1"/>
    <property type="molecule type" value="Genomic_DNA"/>
</dbReference>
<dbReference type="RefSeq" id="YP_913209.1">
    <property type="nucleotide sequence ID" value="NC_008641.1"/>
</dbReference>
<dbReference type="SMR" id="A0ZZ57"/>
<dbReference type="GeneID" id="4575252"/>
<dbReference type="GO" id="GO:0009507">
    <property type="term" value="C:chloroplast"/>
    <property type="evidence" value="ECO:0007669"/>
    <property type="project" value="UniProtKB-SubCell"/>
</dbReference>
<dbReference type="GO" id="GO:0005763">
    <property type="term" value="C:mitochondrial small ribosomal subunit"/>
    <property type="evidence" value="ECO:0007669"/>
    <property type="project" value="TreeGrafter"/>
</dbReference>
<dbReference type="GO" id="GO:0070181">
    <property type="term" value="F:small ribosomal subunit rRNA binding"/>
    <property type="evidence" value="ECO:0007669"/>
    <property type="project" value="TreeGrafter"/>
</dbReference>
<dbReference type="GO" id="GO:0003735">
    <property type="term" value="F:structural constituent of ribosome"/>
    <property type="evidence" value="ECO:0007669"/>
    <property type="project" value="InterPro"/>
</dbReference>
<dbReference type="GO" id="GO:0006412">
    <property type="term" value="P:translation"/>
    <property type="evidence" value="ECO:0007669"/>
    <property type="project" value="UniProtKB-UniRule"/>
</dbReference>
<dbReference type="FunFam" id="4.10.640.10:FF:000002">
    <property type="entry name" value="30S ribosomal protein S18, chloroplastic"/>
    <property type="match status" value="1"/>
</dbReference>
<dbReference type="Gene3D" id="4.10.640.10">
    <property type="entry name" value="Ribosomal protein S18"/>
    <property type="match status" value="1"/>
</dbReference>
<dbReference type="HAMAP" id="MF_00270">
    <property type="entry name" value="Ribosomal_bS18"/>
    <property type="match status" value="1"/>
</dbReference>
<dbReference type="InterPro" id="IPR001648">
    <property type="entry name" value="Ribosomal_bS18"/>
</dbReference>
<dbReference type="InterPro" id="IPR018275">
    <property type="entry name" value="Ribosomal_bS18_CS"/>
</dbReference>
<dbReference type="InterPro" id="IPR036870">
    <property type="entry name" value="Ribosomal_bS18_sf"/>
</dbReference>
<dbReference type="NCBIfam" id="TIGR00165">
    <property type="entry name" value="S18"/>
    <property type="match status" value="1"/>
</dbReference>
<dbReference type="PANTHER" id="PTHR13479">
    <property type="entry name" value="30S RIBOSOMAL PROTEIN S18"/>
    <property type="match status" value="1"/>
</dbReference>
<dbReference type="PANTHER" id="PTHR13479:SF40">
    <property type="entry name" value="SMALL RIBOSOMAL SUBUNIT PROTEIN BS18M"/>
    <property type="match status" value="1"/>
</dbReference>
<dbReference type="Pfam" id="PF01084">
    <property type="entry name" value="Ribosomal_S18"/>
    <property type="match status" value="1"/>
</dbReference>
<dbReference type="PRINTS" id="PR00974">
    <property type="entry name" value="RIBOSOMALS18"/>
</dbReference>
<dbReference type="SUPFAM" id="SSF46911">
    <property type="entry name" value="Ribosomal protein S18"/>
    <property type="match status" value="1"/>
</dbReference>
<dbReference type="PROSITE" id="PS00057">
    <property type="entry name" value="RIBOSOMAL_S18"/>
    <property type="match status" value="1"/>
</dbReference>
<reference key="1">
    <citation type="journal article" date="2006" name="Genes Genet. Syst.">
        <title>Complete nucleotide sequence of the cotton (Gossypium barbadense L.) chloroplast genome with a comparative analysis of sequences among 9 dicot plants.</title>
        <authorList>
            <person name="Ibrahim R.I.H."/>
            <person name="Azuma J."/>
            <person name="Sakamoto M."/>
        </authorList>
    </citation>
    <scope>NUCLEOTIDE SEQUENCE [LARGE SCALE GENOMIC DNA]</scope>
</reference>
<proteinExistence type="inferred from homology"/>
<evidence type="ECO:0000255" key="1">
    <source>
        <dbReference type="HAMAP-Rule" id="MF_00270"/>
    </source>
</evidence>
<evidence type="ECO:0000305" key="2"/>